<accession>Q9LD37</accession>
<dbReference type="EMBL" id="AF148541">
    <property type="protein sequence ID" value="AAF73128.1"/>
    <property type="molecule type" value="mRNA"/>
</dbReference>
<dbReference type="EMBL" id="AF148542">
    <property type="protein sequence ID" value="AAF73130.1"/>
    <property type="molecule type" value="Genomic_DNA"/>
</dbReference>
<dbReference type="EMBL" id="AB022219">
    <property type="protein sequence ID" value="BAB02062.1"/>
    <property type="molecule type" value="Genomic_DNA"/>
</dbReference>
<dbReference type="EMBL" id="CP002686">
    <property type="protein sequence ID" value="AEE75994.1"/>
    <property type="molecule type" value="Genomic_DNA"/>
</dbReference>
<dbReference type="RefSeq" id="NP_566585.1">
    <property type="nucleotide sequence ID" value="NM_112651.5"/>
</dbReference>
<dbReference type="BioGRID" id="6370">
    <property type="interactions" value="7"/>
</dbReference>
<dbReference type="FunCoup" id="Q9LD37">
    <property type="interactions" value="228"/>
</dbReference>
<dbReference type="IntAct" id="Q9LD37">
    <property type="interactions" value="1"/>
</dbReference>
<dbReference type="STRING" id="3702.Q9LD37"/>
<dbReference type="TCDB" id="1.A.1.5.24">
    <property type="family name" value="the voltage-gated ion channel (vic) superfamily"/>
</dbReference>
<dbReference type="iPTMnet" id="Q9LD37"/>
<dbReference type="PaxDb" id="3702-AT3G17700.1"/>
<dbReference type="ProteomicsDB" id="220480"/>
<dbReference type="EnsemblPlants" id="AT3G17700.1">
    <property type="protein sequence ID" value="AT3G17700.1"/>
    <property type="gene ID" value="AT3G17700"/>
</dbReference>
<dbReference type="GeneID" id="821037"/>
<dbReference type="Gramene" id="AT3G17700.1">
    <property type="protein sequence ID" value="AT3G17700.1"/>
    <property type="gene ID" value="AT3G17700"/>
</dbReference>
<dbReference type="KEGG" id="ath:AT3G17700"/>
<dbReference type="Araport" id="AT3G17700"/>
<dbReference type="TAIR" id="AT3G17700">
    <property type="gene designation" value="CNBT1"/>
</dbReference>
<dbReference type="eggNOG" id="KOG0498">
    <property type="taxonomic scope" value="Eukaryota"/>
</dbReference>
<dbReference type="HOGENOM" id="CLU_013069_2_0_1"/>
<dbReference type="InParanoid" id="Q9LD37"/>
<dbReference type="OrthoDB" id="421226at2759"/>
<dbReference type="PhylomeDB" id="Q9LD37"/>
<dbReference type="PRO" id="PR:Q9LD37"/>
<dbReference type="Proteomes" id="UP000006548">
    <property type="component" value="Chromosome 3"/>
</dbReference>
<dbReference type="ExpressionAtlas" id="Q9LD37">
    <property type="expression patterns" value="baseline and differential"/>
</dbReference>
<dbReference type="GO" id="GO:0009535">
    <property type="term" value="C:chloroplast thylakoid membrane"/>
    <property type="evidence" value="ECO:0007669"/>
    <property type="project" value="UniProtKB-SubCell"/>
</dbReference>
<dbReference type="GO" id="GO:0005516">
    <property type="term" value="F:calmodulin binding"/>
    <property type="evidence" value="ECO:0007669"/>
    <property type="project" value="UniProtKB-KW"/>
</dbReference>
<dbReference type="GO" id="GO:0030552">
    <property type="term" value="F:cAMP binding"/>
    <property type="evidence" value="ECO:0007669"/>
    <property type="project" value="UniProtKB-KW"/>
</dbReference>
<dbReference type="GO" id="GO:0030553">
    <property type="term" value="F:cGMP binding"/>
    <property type="evidence" value="ECO:0007669"/>
    <property type="project" value="UniProtKB-KW"/>
</dbReference>
<dbReference type="GO" id="GO:0005216">
    <property type="term" value="F:monoatomic ion channel activity"/>
    <property type="evidence" value="ECO:0007669"/>
    <property type="project" value="InterPro"/>
</dbReference>
<dbReference type="GO" id="GO:0009624">
    <property type="term" value="P:response to nematode"/>
    <property type="evidence" value="ECO:0007007"/>
    <property type="project" value="TAIR"/>
</dbReference>
<dbReference type="CDD" id="cd00038">
    <property type="entry name" value="CAP_ED"/>
    <property type="match status" value="1"/>
</dbReference>
<dbReference type="FunFam" id="2.60.120.10:FF:000186">
    <property type="entry name" value="Cyclic nucleotide-binding transporter 1"/>
    <property type="match status" value="1"/>
</dbReference>
<dbReference type="Gene3D" id="1.10.287.70">
    <property type="match status" value="1"/>
</dbReference>
<dbReference type="Gene3D" id="1.10.287.630">
    <property type="entry name" value="Helix hairpin bin"/>
    <property type="match status" value="1"/>
</dbReference>
<dbReference type="Gene3D" id="2.60.120.10">
    <property type="entry name" value="Jelly Rolls"/>
    <property type="match status" value="1"/>
</dbReference>
<dbReference type="InterPro" id="IPR000595">
    <property type="entry name" value="cNMP-bd_dom"/>
</dbReference>
<dbReference type="InterPro" id="IPR018490">
    <property type="entry name" value="cNMP-bd_dom_sf"/>
</dbReference>
<dbReference type="InterPro" id="IPR005821">
    <property type="entry name" value="Ion_trans_dom"/>
</dbReference>
<dbReference type="InterPro" id="IPR014710">
    <property type="entry name" value="RmlC-like_jellyroll"/>
</dbReference>
<dbReference type="PANTHER" id="PTHR45651">
    <property type="entry name" value="CYCLIC NUCLEOTIDE-GATED ION CHANNEL 15-RELATED-RELATED"/>
    <property type="match status" value="1"/>
</dbReference>
<dbReference type="PANTHER" id="PTHR45651:SF11">
    <property type="entry name" value="CYCLIC NUCLEOTIDE-GATED ION CHANNEL 20, CHLOROPLASTIC-RELATED"/>
    <property type="match status" value="1"/>
</dbReference>
<dbReference type="Pfam" id="PF00520">
    <property type="entry name" value="Ion_trans"/>
    <property type="match status" value="1"/>
</dbReference>
<dbReference type="SUPFAM" id="SSF51206">
    <property type="entry name" value="cAMP-binding domain-like"/>
    <property type="match status" value="1"/>
</dbReference>
<dbReference type="SUPFAM" id="SSF81324">
    <property type="entry name" value="Voltage-gated potassium channels"/>
    <property type="match status" value="1"/>
</dbReference>
<dbReference type="PROSITE" id="PS50042">
    <property type="entry name" value="CNMP_BINDING_3"/>
    <property type="match status" value="1"/>
</dbReference>
<keyword id="KW-0112">Calmodulin-binding</keyword>
<keyword id="KW-0114">cAMP</keyword>
<keyword id="KW-0116">cAMP-binding</keyword>
<keyword id="KW-0140">cGMP</keyword>
<keyword id="KW-0142">cGMP-binding</keyword>
<keyword id="KW-0150">Chloroplast</keyword>
<keyword id="KW-0407">Ion channel</keyword>
<keyword id="KW-0406">Ion transport</keyword>
<keyword id="KW-1071">Ligand-gated ion channel</keyword>
<keyword id="KW-0472">Membrane</keyword>
<keyword id="KW-0547">Nucleotide-binding</keyword>
<keyword id="KW-0934">Plastid</keyword>
<keyword id="KW-1185">Reference proteome</keyword>
<keyword id="KW-0793">Thylakoid</keyword>
<keyword id="KW-0809">Transit peptide</keyword>
<keyword id="KW-0812">Transmembrane</keyword>
<keyword id="KW-1133">Transmembrane helix</keyword>
<keyword id="KW-0813">Transport</keyword>
<comment type="function">
    <text>Probable cyclic nucleotide-gated ion channel.</text>
</comment>
<comment type="subunit">
    <text evidence="4">Homotetramer or heterotetramer.</text>
</comment>
<comment type="subcellular location">
    <subcellularLocation>
        <location evidence="4">Plastid</location>
        <location evidence="4">Chloroplast thylakoid membrane</location>
        <topology evidence="4">Multi-pass membrane protein</topology>
    </subcellularLocation>
</comment>
<comment type="similarity">
    <text evidence="4">Belongs to the cyclic nucleotide-gated cation channel (TC 1.A.1.5) family.</text>
</comment>
<sequence>MASHNENDDIPMLPISDPSSRTRARAFTSRSRSVSLSNPTSSIEGFDTSTVVLGYTGPLRTQRRPPLVQMSGPLTSTRKHEPLFLPHPSSDSVGVSSQPERYPSFAALEHKNSSEDEFVLKHANLLRSGQLGMCNDPYCTTCPSYYNRKAAQIPTSRVSALFDSTFHNALYDDAKGWARRFASSVNRYLPGIMNPHAKEVQTWTKFFALSCLLAIFIDPLFFFLIKVQEQNKCIMIDWPMTKAFVAVRSVTDVIFTMNILLQFRLAYVARESTVVGAGQLVSHPKKIALHYLKGKFFLDLFIVMPLPQILILWIIPAHLGASGANYAKNLLRAAVLFQYIPKLYRLLPFLAGQTPTGFIFESAWANFVINLLTFMLAGHVVGSCWYLFGLQRVNQCLRNACGNFGRECQDLIDCGNGNSSVLVRATWKDNASANACFQEDGFPYGIYLKAVNLTNHSNLFTRYSYSLFWGFQQISTLAGNQVPSYFLGEVFFTMGIIGLGLLLFALLIGNMQNFLQALGKRNLEMTLRRRDVEQWMSHRRLPDGIRRRVREAERFNWAATRGVNEELLFENMPDDLQRDIRRHLFKFLKKVRIFSLMDEPILDAIRERLKQRTYIGSSTVLHRGGLVEKMVFIVRGEMESIGEDGSVLPLYEGDVCGEELLTWCLERSSVNPDGTRIRMPSKGLLSSRNVRCVTNVEAFSLSVADLEDVTSLFSRFLRSHRVQGAIRYDSPYWRLRAARQIQVAWRYRRRRLHRLCTPQSSYSL</sequence>
<organism>
    <name type="scientific">Arabidopsis thaliana</name>
    <name type="common">Mouse-ear cress</name>
    <dbReference type="NCBI Taxonomy" id="3702"/>
    <lineage>
        <taxon>Eukaryota</taxon>
        <taxon>Viridiplantae</taxon>
        <taxon>Streptophyta</taxon>
        <taxon>Embryophyta</taxon>
        <taxon>Tracheophyta</taxon>
        <taxon>Spermatophyta</taxon>
        <taxon>Magnoliopsida</taxon>
        <taxon>eudicotyledons</taxon>
        <taxon>Gunneridae</taxon>
        <taxon>Pentapetalae</taxon>
        <taxon>rosids</taxon>
        <taxon>malvids</taxon>
        <taxon>Brassicales</taxon>
        <taxon>Brassicaceae</taxon>
        <taxon>Camelineae</taxon>
        <taxon>Arabidopsis</taxon>
    </lineage>
</organism>
<name>CNG20_ARATH</name>
<feature type="transit peptide" description="Chloroplast" evidence="2">
    <location>
        <begin position="1"/>
        <end position="25"/>
    </location>
</feature>
<feature type="chain" id="PRO_0000005556" description="Probable cyclic nucleotide-gated ion channel 20, chloroplastic">
    <location>
        <begin position="26"/>
        <end position="764"/>
    </location>
</feature>
<feature type="topological domain" description="Stromal" evidence="2">
    <location>
        <begin position="26"/>
        <end position="204"/>
    </location>
</feature>
<feature type="transmembrane region" description="Helical; Name=H1" evidence="2">
    <location>
        <begin position="205"/>
        <end position="225"/>
    </location>
</feature>
<feature type="topological domain" description="Lumenal" evidence="2">
    <location>
        <begin position="226"/>
        <end position="242"/>
    </location>
</feature>
<feature type="transmembrane region" description="Helical; Name=H2" evidence="2">
    <location>
        <begin position="243"/>
        <end position="263"/>
    </location>
</feature>
<feature type="topological domain" description="Stromal" evidence="2">
    <location>
        <begin position="264"/>
        <end position="295"/>
    </location>
</feature>
<feature type="transmembrane region" description="Helical; Name=H3" evidence="2">
    <location>
        <begin position="296"/>
        <end position="316"/>
    </location>
</feature>
<feature type="topological domain" description="Lumenal" evidence="2">
    <location>
        <begin position="317"/>
        <end position="329"/>
    </location>
</feature>
<feature type="transmembrane region" description="Helical; Name=H4" evidence="2">
    <location>
        <begin position="330"/>
        <end position="350"/>
    </location>
</feature>
<feature type="topological domain" description="Stromal" evidence="2">
    <location>
        <begin position="351"/>
        <end position="366"/>
    </location>
</feature>
<feature type="transmembrane region" description="Helical; Name=H5" evidence="2">
    <location>
        <begin position="367"/>
        <end position="387"/>
    </location>
</feature>
<feature type="topological domain" description="Lumenal" evidence="2">
    <location>
        <begin position="388"/>
        <end position="488"/>
    </location>
</feature>
<feature type="transmembrane region" description="Helical; Name=H6" evidence="2">
    <location>
        <begin position="489"/>
        <end position="509"/>
    </location>
</feature>
<feature type="topological domain" description="Stromal" evidence="2">
    <location>
        <begin position="510"/>
        <end position="764"/>
    </location>
</feature>
<feature type="domain" description="IQ">
    <location>
        <begin position="734"/>
        <end position="763"/>
    </location>
</feature>
<feature type="region of interest" description="Disordered" evidence="3">
    <location>
        <begin position="1"/>
        <end position="40"/>
    </location>
</feature>
<feature type="region of interest" description="Calmodulin-binding" evidence="1">
    <location>
        <begin position="713"/>
        <end position="729"/>
    </location>
</feature>
<feature type="compositionally biased region" description="Low complexity" evidence="3">
    <location>
        <begin position="19"/>
        <end position="33"/>
    </location>
</feature>
<feature type="binding site">
    <location>
        <begin position="593"/>
        <end position="710"/>
    </location>
    <ligand>
        <name>a nucleoside 3',5'-cyclic phosphate</name>
        <dbReference type="ChEBI" id="CHEBI:58464"/>
    </ligand>
</feature>
<feature type="binding site" evidence="1">
    <location>
        <position position="658"/>
    </location>
    <ligand>
        <name>a nucleoside 3',5'-cyclic phosphate</name>
        <dbReference type="ChEBI" id="CHEBI:58464"/>
    </ligand>
</feature>
<reference key="1">
    <citation type="submission" date="1999-05" db="EMBL/GenBank/DDBJ databases">
        <title>Two genes encoding putative cyclic nucleotide-binding ion transporters from Arabidopsis thaliana.</title>
        <authorList>
            <person name="Wolff P."/>
            <person name="Palme K."/>
        </authorList>
    </citation>
    <scope>NUCLEOTIDE SEQUENCE [GENOMIC DNA / MRNA]</scope>
    <source>
        <strain>cv. Columbia</strain>
    </source>
</reference>
<reference key="2">
    <citation type="journal article" date="2000" name="DNA Res.">
        <title>Structural analysis of Arabidopsis thaliana chromosome 3. I. Sequence features of the regions of 4,504,864 bp covered by sixty P1 and TAC clones.</title>
        <authorList>
            <person name="Sato S."/>
            <person name="Nakamura Y."/>
            <person name="Kaneko T."/>
            <person name="Katoh T."/>
            <person name="Asamizu E."/>
            <person name="Tabata S."/>
        </authorList>
    </citation>
    <scope>NUCLEOTIDE SEQUENCE [LARGE SCALE GENOMIC DNA]</scope>
    <source>
        <strain>cv. Columbia</strain>
    </source>
</reference>
<reference key="3">
    <citation type="journal article" date="2017" name="Plant J.">
        <title>Araport11: a complete reannotation of the Arabidopsis thaliana reference genome.</title>
        <authorList>
            <person name="Cheng C.Y."/>
            <person name="Krishnakumar V."/>
            <person name="Chan A.P."/>
            <person name="Thibaud-Nissen F."/>
            <person name="Schobel S."/>
            <person name="Town C.D."/>
        </authorList>
    </citation>
    <scope>GENOME REANNOTATION</scope>
    <source>
        <strain>cv. Columbia</strain>
    </source>
</reference>
<reference key="4">
    <citation type="journal article" date="2001" name="Plant Physiol.">
        <title>Phylogenetic relationships within cation transporter families of Arabidopsis.</title>
        <authorList>
            <person name="Maeser P."/>
            <person name="Thomine S."/>
            <person name="Schroeder J.I."/>
            <person name="Ward J.M."/>
            <person name="Hirschi K."/>
            <person name="Sze H."/>
            <person name="Talke I.N."/>
            <person name="Amtmann A."/>
            <person name="Maathuis F.J.M."/>
            <person name="Sanders D."/>
            <person name="Harper J.F."/>
            <person name="Tchieu J."/>
            <person name="Gribskov M."/>
            <person name="Persans M.W."/>
            <person name="Salt D.E."/>
            <person name="Kim S.A."/>
            <person name="Guerinot M.L."/>
        </authorList>
    </citation>
    <scope>GENE FAMILY</scope>
    <scope>NOMENCLATURE</scope>
</reference>
<protein>
    <recommendedName>
        <fullName>Probable cyclic nucleotide-gated ion channel 20, chloroplastic</fullName>
    </recommendedName>
    <alternativeName>
        <fullName>Cyclic nucleotide-binding transporter 1</fullName>
    </alternativeName>
</protein>
<gene>
    <name type="primary">CNGC20</name>
    <name type="synonym">CNBT1</name>
    <name type="ordered locus">At3g17700</name>
    <name type="ORF">MKP6.28</name>
</gene>
<evidence type="ECO:0000250" key="1"/>
<evidence type="ECO:0000255" key="2"/>
<evidence type="ECO:0000256" key="3">
    <source>
        <dbReference type="SAM" id="MobiDB-lite"/>
    </source>
</evidence>
<evidence type="ECO:0000305" key="4"/>
<proteinExistence type="evidence at transcript level"/>